<keyword id="KW-0963">Cytoplasm</keyword>
<keyword id="KW-0479">Metal-binding</keyword>
<keyword id="KW-0520">NAD</keyword>
<keyword id="KW-0808">Transferase</keyword>
<keyword id="KW-0862">Zinc</keyword>
<dbReference type="EC" id="2.3.1.286" evidence="1 2"/>
<dbReference type="EMBL" id="AE015929">
    <property type="protein sequence ID" value="AAO05430.1"/>
    <property type="molecule type" value="Genomic_DNA"/>
</dbReference>
<dbReference type="RefSeq" id="NP_765344.1">
    <property type="nucleotide sequence ID" value="NC_004461.1"/>
</dbReference>
<dbReference type="RefSeq" id="WP_001829706.1">
    <property type="nucleotide sequence ID" value="NZ_WBME01000007.1"/>
</dbReference>
<dbReference type="SMR" id="Q8CNF4"/>
<dbReference type="KEGG" id="sep:SE_1789"/>
<dbReference type="PATRIC" id="fig|176280.10.peg.1746"/>
<dbReference type="eggNOG" id="COG0846">
    <property type="taxonomic scope" value="Bacteria"/>
</dbReference>
<dbReference type="HOGENOM" id="CLU_023643_3_0_9"/>
<dbReference type="OrthoDB" id="9800582at2"/>
<dbReference type="Proteomes" id="UP000001411">
    <property type="component" value="Chromosome"/>
</dbReference>
<dbReference type="GO" id="GO:0005737">
    <property type="term" value="C:cytoplasm"/>
    <property type="evidence" value="ECO:0007669"/>
    <property type="project" value="UniProtKB-SubCell"/>
</dbReference>
<dbReference type="GO" id="GO:0017136">
    <property type="term" value="F:histone deacetylase activity, NAD-dependent"/>
    <property type="evidence" value="ECO:0007669"/>
    <property type="project" value="TreeGrafter"/>
</dbReference>
<dbReference type="GO" id="GO:0070403">
    <property type="term" value="F:NAD+ binding"/>
    <property type="evidence" value="ECO:0007669"/>
    <property type="project" value="UniProtKB-UniRule"/>
</dbReference>
<dbReference type="GO" id="GO:0008270">
    <property type="term" value="F:zinc ion binding"/>
    <property type="evidence" value="ECO:0007669"/>
    <property type="project" value="UniProtKB-UniRule"/>
</dbReference>
<dbReference type="Gene3D" id="3.30.1600.10">
    <property type="entry name" value="SIR2/SIRT2 'Small Domain"/>
    <property type="match status" value="1"/>
</dbReference>
<dbReference type="Gene3D" id="3.40.50.1220">
    <property type="entry name" value="TPP-binding domain"/>
    <property type="match status" value="1"/>
</dbReference>
<dbReference type="HAMAP" id="MF_01968">
    <property type="entry name" value="Sirtuin_ClassU"/>
    <property type="match status" value="1"/>
</dbReference>
<dbReference type="InterPro" id="IPR029035">
    <property type="entry name" value="DHS-like_NAD/FAD-binding_dom"/>
</dbReference>
<dbReference type="InterPro" id="IPR050134">
    <property type="entry name" value="NAD-dep_sirtuin_deacylases"/>
</dbReference>
<dbReference type="InterPro" id="IPR003000">
    <property type="entry name" value="Sirtuin"/>
</dbReference>
<dbReference type="InterPro" id="IPR026591">
    <property type="entry name" value="Sirtuin_cat_small_dom_sf"/>
</dbReference>
<dbReference type="InterPro" id="IPR028628">
    <property type="entry name" value="Sirtuin_class_U"/>
</dbReference>
<dbReference type="InterPro" id="IPR026590">
    <property type="entry name" value="Ssirtuin_cat_dom"/>
</dbReference>
<dbReference type="NCBIfam" id="NF001752">
    <property type="entry name" value="PRK00481.1-1"/>
    <property type="match status" value="1"/>
</dbReference>
<dbReference type="NCBIfam" id="NF001753">
    <property type="entry name" value="PRK00481.1-3"/>
    <property type="match status" value="1"/>
</dbReference>
<dbReference type="PANTHER" id="PTHR11085:SF4">
    <property type="entry name" value="NAD-DEPENDENT PROTEIN DEACYLASE"/>
    <property type="match status" value="1"/>
</dbReference>
<dbReference type="PANTHER" id="PTHR11085">
    <property type="entry name" value="NAD-DEPENDENT PROTEIN DEACYLASE SIRTUIN-5, MITOCHONDRIAL-RELATED"/>
    <property type="match status" value="1"/>
</dbReference>
<dbReference type="Pfam" id="PF02146">
    <property type="entry name" value="SIR2"/>
    <property type="match status" value="1"/>
</dbReference>
<dbReference type="SUPFAM" id="SSF52467">
    <property type="entry name" value="DHS-like NAD/FAD-binding domain"/>
    <property type="match status" value="1"/>
</dbReference>
<dbReference type="PROSITE" id="PS50305">
    <property type="entry name" value="SIRTUIN"/>
    <property type="match status" value="1"/>
</dbReference>
<accession>Q8CNF4</accession>
<feature type="chain" id="PRO_0000110357" description="NAD-dependent protein deacetylase">
    <location>
        <begin position="1"/>
        <end position="246"/>
    </location>
</feature>
<feature type="domain" description="Deacetylase sirtuin-type" evidence="2">
    <location>
        <begin position="1"/>
        <end position="246"/>
    </location>
</feature>
<feature type="active site" description="Proton acceptor" evidence="2">
    <location>
        <position position="124"/>
    </location>
</feature>
<feature type="binding site" evidence="1">
    <location>
        <position position="25"/>
    </location>
    <ligand>
        <name>NAD(+)</name>
        <dbReference type="ChEBI" id="CHEBI:57540"/>
    </ligand>
</feature>
<feature type="binding site" evidence="1">
    <location>
        <position position="36"/>
    </location>
    <ligand>
        <name>NAD(+)</name>
        <dbReference type="ChEBI" id="CHEBI:57540"/>
    </ligand>
</feature>
<feature type="binding site" evidence="1">
    <location>
        <position position="36"/>
    </location>
    <ligand>
        <name>nicotinamide</name>
        <dbReference type="ChEBI" id="CHEBI:17154"/>
    </ligand>
</feature>
<feature type="binding site" evidence="1">
    <location>
        <position position="37"/>
    </location>
    <ligand>
        <name>NAD(+)</name>
        <dbReference type="ChEBI" id="CHEBI:57540"/>
    </ligand>
</feature>
<feature type="binding site" evidence="1">
    <location>
        <position position="106"/>
    </location>
    <ligand>
        <name>NAD(+)</name>
        <dbReference type="ChEBI" id="CHEBI:57540"/>
    </ligand>
</feature>
<feature type="binding site" evidence="1">
    <location>
        <position position="108"/>
    </location>
    <ligand>
        <name>NAD(+)</name>
        <dbReference type="ChEBI" id="CHEBI:57540"/>
    </ligand>
</feature>
<feature type="binding site" evidence="1">
    <location>
        <position position="108"/>
    </location>
    <ligand>
        <name>nicotinamide</name>
        <dbReference type="ChEBI" id="CHEBI:17154"/>
    </ligand>
</feature>
<feature type="binding site" evidence="1">
    <location>
        <position position="109"/>
    </location>
    <ligand>
        <name>NAD(+)</name>
        <dbReference type="ChEBI" id="CHEBI:57540"/>
    </ligand>
</feature>
<feature type="binding site" evidence="1">
    <location>
        <position position="109"/>
    </location>
    <ligand>
        <name>nicotinamide</name>
        <dbReference type="ChEBI" id="CHEBI:17154"/>
    </ligand>
</feature>
<feature type="binding site" evidence="1">
    <location>
        <position position="124"/>
    </location>
    <ligand>
        <name>NAD(+)</name>
        <dbReference type="ChEBI" id="CHEBI:57540"/>
    </ligand>
</feature>
<feature type="binding site" evidence="1">
    <location>
        <position position="132"/>
    </location>
    <ligand>
        <name>Zn(2+)</name>
        <dbReference type="ChEBI" id="CHEBI:29105"/>
    </ligand>
</feature>
<feature type="binding site" evidence="1">
    <location>
        <position position="135"/>
    </location>
    <ligand>
        <name>Zn(2+)</name>
        <dbReference type="ChEBI" id="CHEBI:29105"/>
    </ligand>
</feature>
<feature type="binding site" evidence="1">
    <location>
        <position position="152"/>
    </location>
    <ligand>
        <name>Zn(2+)</name>
        <dbReference type="ChEBI" id="CHEBI:29105"/>
    </ligand>
</feature>
<feature type="binding site" evidence="1">
    <location>
        <position position="155"/>
    </location>
    <ligand>
        <name>Zn(2+)</name>
        <dbReference type="ChEBI" id="CHEBI:29105"/>
    </ligand>
</feature>
<feature type="binding site" evidence="1">
    <location>
        <position position="193"/>
    </location>
    <ligand>
        <name>NAD(+)</name>
        <dbReference type="ChEBI" id="CHEBI:57540"/>
    </ligand>
</feature>
<feature type="binding site" evidence="1">
    <location>
        <position position="194"/>
    </location>
    <ligand>
        <name>NAD(+)</name>
        <dbReference type="ChEBI" id="CHEBI:57540"/>
    </ligand>
</feature>
<feature type="binding site" evidence="1">
    <location>
        <position position="216"/>
    </location>
    <ligand>
        <name>NAD(+)</name>
        <dbReference type="ChEBI" id="CHEBI:57540"/>
    </ligand>
</feature>
<feature type="binding site" evidence="1">
    <location>
        <position position="233"/>
    </location>
    <ligand>
        <name>NAD(+)</name>
        <dbReference type="ChEBI" id="CHEBI:57540"/>
    </ligand>
</feature>
<gene>
    <name evidence="1" type="primary">cobB</name>
    <name type="ordered locus">SE_1789</name>
</gene>
<organism>
    <name type="scientific">Staphylococcus epidermidis (strain ATCC 12228 / FDA PCI 1200)</name>
    <dbReference type="NCBI Taxonomy" id="176280"/>
    <lineage>
        <taxon>Bacteria</taxon>
        <taxon>Bacillati</taxon>
        <taxon>Bacillota</taxon>
        <taxon>Bacilli</taxon>
        <taxon>Bacillales</taxon>
        <taxon>Staphylococcaceae</taxon>
        <taxon>Staphylococcus</taxon>
    </lineage>
</organism>
<protein>
    <recommendedName>
        <fullName evidence="1">NAD-dependent protein deacetylase</fullName>
        <ecNumber evidence="1 2">2.3.1.286</ecNumber>
    </recommendedName>
    <alternativeName>
        <fullName evidence="1">Regulatory protein SIR2 homolog</fullName>
    </alternativeName>
</protein>
<evidence type="ECO:0000255" key="1">
    <source>
        <dbReference type="HAMAP-Rule" id="MF_01968"/>
    </source>
</evidence>
<evidence type="ECO:0000255" key="2">
    <source>
        <dbReference type="PROSITE-ProRule" id="PRU00236"/>
    </source>
</evidence>
<proteinExistence type="inferred from homology"/>
<name>NPD_STAES</name>
<reference key="1">
    <citation type="journal article" date="2003" name="Mol. Microbiol.">
        <title>Genome-based analysis of virulence genes in a non-biofilm-forming Staphylococcus epidermidis strain (ATCC 12228).</title>
        <authorList>
            <person name="Zhang Y.-Q."/>
            <person name="Ren S.-X."/>
            <person name="Li H.-L."/>
            <person name="Wang Y.-X."/>
            <person name="Fu G."/>
            <person name="Yang J."/>
            <person name="Qin Z.-Q."/>
            <person name="Miao Y.-G."/>
            <person name="Wang W.-Y."/>
            <person name="Chen R.-S."/>
            <person name="Shen Y."/>
            <person name="Chen Z."/>
            <person name="Yuan Z.-H."/>
            <person name="Zhao G.-P."/>
            <person name="Qu D."/>
            <person name="Danchin A."/>
            <person name="Wen Y.-M."/>
        </authorList>
    </citation>
    <scope>NUCLEOTIDE SEQUENCE [LARGE SCALE GENOMIC DNA]</scope>
    <source>
        <strain>ATCC 12228 / FDA PCI 1200</strain>
    </source>
</reference>
<sequence length="246" mass="27695">MKKPDIQQLKDIVNNSNQIVFFTGAGVSVASGIPDFRSMGGLYDEISKDGQSPEYLLSIDHLHDNKESFINFYHERLLIADKKPNIVHQWIAQLENQQKSLGVITQNIDGLHEDAGSHNIDELHGTLNRFYCINCYEEYSKSYVMTHHLKYCEKCGNVIRPDIVLYGEMLNQKTVFKALDKIQHADTLIVLGSSLVVQPAAGFVSEFKGDNLVIINRDATPYDHTASLVIHDDMTSVIEEIVNSNS</sequence>
<comment type="function">
    <text evidence="1">NAD-dependent protein deacetylase which modulates the activities of several enzymes which are inactive in their acetylated form.</text>
</comment>
<comment type="catalytic activity">
    <reaction evidence="1">
        <text>N(6)-acetyl-L-lysyl-[protein] + NAD(+) + H2O = 2''-O-acetyl-ADP-D-ribose + nicotinamide + L-lysyl-[protein]</text>
        <dbReference type="Rhea" id="RHEA:43636"/>
        <dbReference type="Rhea" id="RHEA-COMP:9752"/>
        <dbReference type="Rhea" id="RHEA-COMP:10731"/>
        <dbReference type="ChEBI" id="CHEBI:15377"/>
        <dbReference type="ChEBI" id="CHEBI:17154"/>
        <dbReference type="ChEBI" id="CHEBI:29969"/>
        <dbReference type="ChEBI" id="CHEBI:57540"/>
        <dbReference type="ChEBI" id="CHEBI:61930"/>
        <dbReference type="ChEBI" id="CHEBI:83767"/>
        <dbReference type="EC" id="2.3.1.286"/>
    </reaction>
</comment>
<comment type="cofactor">
    <cofactor evidence="1">
        <name>Zn(2+)</name>
        <dbReference type="ChEBI" id="CHEBI:29105"/>
    </cofactor>
    <text evidence="1">Binds 1 zinc ion per subunit.</text>
</comment>
<comment type="subcellular location">
    <subcellularLocation>
        <location evidence="1">Cytoplasm</location>
    </subcellularLocation>
</comment>
<comment type="similarity">
    <text evidence="1">Belongs to the sirtuin family. Class U subfamily.</text>
</comment>